<comment type="function">
    <text evidence="1">Catalyzes the ATP-dependent conversion of 7-carboxy-7-deazaguanine (CDG) to 7-cyano-7-deazaguanine (preQ(0)).</text>
</comment>
<comment type="catalytic activity">
    <reaction evidence="1">
        <text>7-carboxy-7-deazaguanine + NH4(+) + ATP = 7-cyano-7-deazaguanine + ADP + phosphate + H2O + H(+)</text>
        <dbReference type="Rhea" id="RHEA:27982"/>
        <dbReference type="ChEBI" id="CHEBI:15377"/>
        <dbReference type="ChEBI" id="CHEBI:15378"/>
        <dbReference type="ChEBI" id="CHEBI:28938"/>
        <dbReference type="ChEBI" id="CHEBI:30616"/>
        <dbReference type="ChEBI" id="CHEBI:43474"/>
        <dbReference type="ChEBI" id="CHEBI:45075"/>
        <dbReference type="ChEBI" id="CHEBI:61036"/>
        <dbReference type="ChEBI" id="CHEBI:456216"/>
        <dbReference type="EC" id="6.3.4.20"/>
    </reaction>
</comment>
<comment type="cofactor">
    <cofactor evidence="1">
        <name>Zn(2+)</name>
        <dbReference type="ChEBI" id="CHEBI:29105"/>
    </cofactor>
    <text evidence="1">Binds 1 zinc ion per subunit.</text>
</comment>
<comment type="pathway">
    <text evidence="1">Purine metabolism; 7-cyano-7-deazaguanine biosynthesis.</text>
</comment>
<comment type="similarity">
    <text evidence="1">Belongs to the QueC family.</text>
</comment>
<comment type="sequence caution" evidence="2">
    <conflict type="erroneous initiation">
        <sequence resource="EMBL-CDS" id="ABV85121"/>
    </conflict>
</comment>
<dbReference type="EC" id="6.3.4.20" evidence="1"/>
<dbReference type="EMBL" id="CP000683">
    <property type="protein sequence ID" value="ABV85121.1"/>
    <property type="status" value="ALT_INIT"/>
    <property type="molecule type" value="Genomic_DNA"/>
</dbReference>
<dbReference type="RefSeq" id="WP_041404833.1">
    <property type="nucleotide sequence ID" value="NC_009900.1"/>
</dbReference>
<dbReference type="SMR" id="A8F2I5"/>
<dbReference type="KEGG" id="rms:RMA_1106"/>
<dbReference type="HOGENOM" id="CLU_081854_1_0_5"/>
<dbReference type="UniPathway" id="UPA00391"/>
<dbReference type="Proteomes" id="UP000001311">
    <property type="component" value="Chromosome"/>
</dbReference>
<dbReference type="GO" id="GO:0005524">
    <property type="term" value="F:ATP binding"/>
    <property type="evidence" value="ECO:0007669"/>
    <property type="project" value="UniProtKB-UniRule"/>
</dbReference>
<dbReference type="GO" id="GO:0016879">
    <property type="term" value="F:ligase activity, forming carbon-nitrogen bonds"/>
    <property type="evidence" value="ECO:0007669"/>
    <property type="project" value="UniProtKB-UniRule"/>
</dbReference>
<dbReference type="GO" id="GO:0008270">
    <property type="term" value="F:zinc ion binding"/>
    <property type="evidence" value="ECO:0007669"/>
    <property type="project" value="UniProtKB-UniRule"/>
</dbReference>
<dbReference type="GO" id="GO:0008616">
    <property type="term" value="P:queuosine biosynthetic process"/>
    <property type="evidence" value="ECO:0007669"/>
    <property type="project" value="UniProtKB-UniRule"/>
</dbReference>
<dbReference type="CDD" id="cd01995">
    <property type="entry name" value="QueC-like"/>
    <property type="match status" value="1"/>
</dbReference>
<dbReference type="Gene3D" id="3.40.50.620">
    <property type="entry name" value="HUPs"/>
    <property type="match status" value="1"/>
</dbReference>
<dbReference type="HAMAP" id="MF_01633">
    <property type="entry name" value="QueC"/>
    <property type="match status" value="1"/>
</dbReference>
<dbReference type="InterPro" id="IPR018317">
    <property type="entry name" value="QueC"/>
</dbReference>
<dbReference type="InterPro" id="IPR014729">
    <property type="entry name" value="Rossmann-like_a/b/a_fold"/>
</dbReference>
<dbReference type="NCBIfam" id="TIGR00364">
    <property type="entry name" value="7-cyano-7-deazaguanine synthase QueC"/>
    <property type="match status" value="1"/>
</dbReference>
<dbReference type="PANTHER" id="PTHR42914">
    <property type="entry name" value="7-CYANO-7-DEAZAGUANINE SYNTHASE"/>
    <property type="match status" value="1"/>
</dbReference>
<dbReference type="PANTHER" id="PTHR42914:SF1">
    <property type="entry name" value="7-CYANO-7-DEAZAGUANINE SYNTHASE"/>
    <property type="match status" value="1"/>
</dbReference>
<dbReference type="Pfam" id="PF06508">
    <property type="entry name" value="QueC"/>
    <property type="match status" value="1"/>
</dbReference>
<dbReference type="PIRSF" id="PIRSF006293">
    <property type="entry name" value="ExsB"/>
    <property type="match status" value="1"/>
</dbReference>
<dbReference type="SUPFAM" id="SSF52402">
    <property type="entry name" value="Adenine nucleotide alpha hydrolases-like"/>
    <property type="match status" value="1"/>
</dbReference>
<gene>
    <name evidence="1" type="primary">queC</name>
    <name type="ordered locus">RMA_1106</name>
</gene>
<feature type="chain" id="PRO_0000336941" description="7-cyano-7-deazaguanine synthase">
    <location>
        <begin position="1"/>
        <end position="228"/>
    </location>
</feature>
<feature type="binding site" evidence="1">
    <location>
        <begin position="9"/>
        <end position="19"/>
    </location>
    <ligand>
        <name>ATP</name>
        <dbReference type="ChEBI" id="CHEBI:30616"/>
    </ligand>
</feature>
<feature type="binding site" evidence="1">
    <location>
        <position position="193"/>
    </location>
    <ligand>
        <name>Zn(2+)</name>
        <dbReference type="ChEBI" id="CHEBI:29105"/>
    </ligand>
</feature>
<feature type="binding site" evidence="1">
    <location>
        <position position="203"/>
    </location>
    <ligand>
        <name>Zn(2+)</name>
        <dbReference type="ChEBI" id="CHEBI:29105"/>
    </ligand>
</feature>
<feature type="binding site" evidence="1">
    <location>
        <position position="206"/>
    </location>
    <ligand>
        <name>Zn(2+)</name>
        <dbReference type="ChEBI" id="CHEBI:29105"/>
    </ligand>
</feature>
<feature type="binding site" evidence="1">
    <location>
        <position position="209"/>
    </location>
    <ligand>
        <name>Zn(2+)</name>
        <dbReference type="ChEBI" id="CHEBI:29105"/>
    </ligand>
</feature>
<name>QUEC_RICM5</name>
<accession>A8F2I5</accession>
<proteinExistence type="inferred from homology"/>
<organism>
    <name type="scientific">Rickettsia massiliae (strain Mtu5)</name>
    <dbReference type="NCBI Taxonomy" id="416276"/>
    <lineage>
        <taxon>Bacteria</taxon>
        <taxon>Pseudomonadati</taxon>
        <taxon>Pseudomonadota</taxon>
        <taxon>Alphaproteobacteria</taxon>
        <taxon>Rickettsiales</taxon>
        <taxon>Rickettsiaceae</taxon>
        <taxon>Rickettsieae</taxon>
        <taxon>Rickettsia</taxon>
        <taxon>spotted fever group</taxon>
    </lineage>
</organism>
<evidence type="ECO:0000255" key="1">
    <source>
        <dbReference type="HAMAP-Rule" id="MF_01633"/>
    </source>
</evidence>
<evidence type="ECO:0000305" key="2"/>
<reference key="1">
    <citation type="journal article" date="2007" name="Genome Res.">
        <title>Lateral gene transfer between obligate intracellular bacteria: evidence from the Rickettsia massiliae genome.</title>
        <authorList>
            <person name="Blanc G."/>
            <person name="Ogata H."/>
            <person name="Robert C."/>
            <person name="Audic S."/>
            <person name="Claverie J.-M."/>
            <person name="Raoult D."/>
        </authorList>
    </citation>
    <scope>NUCLEOTIDE SEQUENCE [LARGE SCALE GENOMIC DNA]</scope>
    <source>
        <strain>Mtu5</strain>
    </source>
</reference>
<keyword id="KW-0067">ATP-binding</keyword>
<keyword id="KW-0436">Ligase</keyword>
<keyword id="KW-0479">Metal-binding</keyword>
<keyword id="KW-0547">Nucleotide-binding</keyword>
<keyword id="KW-0671">Queuosine biosynthesis</keyword>
<keyword id="KW-0862">Zinc</keyword>
<sequence length="228" mass="25480">MKKKAVILLSGGPDSTTVLEIVSKMDYEIYALSFNYHRRNSPEVQKIQGLIKDYNVKQHRVINIDLQSFIGSALTDDNIDVPKFKHTDQLPSDIPVTYVPARNTIFLSYALGVAEVIGARDIFIGVHTNDYTNYPDCRPEYIKSFEAMANLATRVGVNGEKITIHAPLINMTKEQIIKKGLELGVDYSKTISCYDPTEAGLSCGQCLSCIARLDAFKKNNVQDPIKYV</sequence>
<protein>
    <recommendedName>
        <fullName evidence="1">7-cyano-7-deazaguanine synthase</fullName>
        <ecNumber evidence="1">6.3.4.20</ecNumber>
    </recommendedName>
    <alternativeName>
        <fullName evidence="1">7-cyano-7-carbaguanine synthase</fullName>
    </alternativeName>
    <alternativeName>
        <fullName evidence="1">PreQ(0) synthase</fullName>
    </alternativeName>
    <alternativeName>
        <fullName evidence="1">Queuosine biosynthesis protein QueC</fullName>
    </alternativeName>
</protein>